<feature type="chain" id="PRO_1000075717" description="Ribonuclease 3">
    <location>
        <begin position="1"/>
        <end position="228"/>
    </location>
</feature>
<feature type="domain" description="RNase III" evidence="1">
    <location>
        <begin position="5"/>
        <end position="128"/>
    </location>
</feature>
<feature type="domain" description="DRBM" evidence="1">
    <location>
        <begin position="155"/>
        <end position="225"/>
    </location>
</feature>
<feature type="active site" evidence="1">
    <location>
        <position position="45"/>
    </location>
</feature>
<feature type="active site" evidence="1">
    <location>
        <position position="117"/>
    </location>
</feature>
<feature type="binding site" evidence="1">
    <location>
        <position position="41"/>
    </location>
    <ligand>
        <name>Mg(2+)</name>
        <dbReference type="ChEBI" id="CHEBI:18420"/>
    </ligand>
</feature>
<feature type="binding site" evidence="1">
    <location>
        <position position="114"/>
    </location>
    <ligand>
        <name>Mg(2+)</name>
        <dbReference type="ChEBI" id="CHEBI:18420"/>
    </ligand>
</feature>
<feature type="binding site" evidence="1">
    <location>
        <position position="117"/>
    </location>
    <ligand>
        <name>Mg(2+)</name>
        <dbReference type="ChEBI" id="CHEBI:18420"/>
    </ligand>
</feature>
<sequence>MNGDLNRLMARLGYQFQDLSLLELALTHRSVSRHRNYERLEFLGDAQLGQIISVALFEQFPEAAEGQLTRMRASLVRGQTLALVARELGLGEYLVLGGGELKSGGFRRDSILADALESIIGAMLLDGGEPRCREVVLAWFAPRLDAISPQSAQKDAKTRLQEWLQARKFELPTYEVTQVEGLAPKQTFDVQCSLDNVQQIFIAQGASRRKAEQEAASLALEWLEQQYD</sequence>
<proteinExistence type="inferred from homology"/>
<organism>
    <name type="scientific">Alcanivorax borkumensis (strain ATCC 700651 / DSM 11573 / NCIMB 13689 / SK2)</name>
    <dbReference type="NCBI Taxonomy" id="393595"/>
    <lineage>
        <taxon>Bacteria</taxon>
        <taxon>Pseudomonadati</taxon>
        <taxon>Pseudomonadota</taxon>
        <taxon>Gammaproteobacteria</taxon>
        <taxon>Oceanospirillales</taxon>
        <taxon>Alcanivoracaceae</taxon>
        <taxon>Alcanivorax</taxon>
    </lineage>
</organism>
<dbReference type="EC" id="3.1.26.3" evidence="1"/>
<dbReference type="EMBL" id="AM286690">
    <property type="protein sequence ID" value="CAL17079.1"/>
    <property type="molecule type" value="Genomic_DNA"/>
</dbReference>
<dbReference type="SMR" id="Q0VP19"/>
<dbReference type="STRING" id="393595.ABO_1631"/>
<dbReference type="KEGG" id="abo:ABO_1631"/>
<dbReference type="eggNOG" id="COG0571">
    <property type="taxonomic scope" value="Bacteria"/>
</dbReference>
<dbReference type="HOGENOM" id="CLU_000907_1_1_6"/>
<dbReference type="OrthoDB" id="9805026at2"/>
<dbReference type="Proteomes" id="UP000008871">
    <property type="component" value="Chromosome"/>
</dbReference>
<dbReference type="GO" id="GO:0005737">
    <property type="term" value="C:cytoplasm"/>
    <property type="evidence" value="ECO:0007669"/>
    <property type="project" value="UniProtKB-SubCell"/>
</dbReference>
<dbReference type="GO" id="GO:0003725">
    <property type="term" value="F:double-stranded RNA binding"/>
    <property type="evidence" value="ECO:0007669"/>
    <property type="project" value="TreeGrafter"/>
</dbReference>
<dbReference type="GO" id="GO:0046872">
    <property type="term" value="F:metal ion binding"/>
    <property type="evidence" value="ECO:0007669"/>
    <property type="project" value="UniProtKB-KW"/>
</dbReference>
<dbReference type="GO" id="GO:0004525">
    <property type="term" value="F:ribonuclease III activity"/>
    <property type="evidence" value="ECO:0007669"/>
    <property type="project" value="UniProtKB-UniRule"/>
</dbReference>
<dbReference type="GO" id="GO:0019843">
    <property type="term" value="F:rRNA binding"/>
    <property type="evidence" value="ECO:0007669"/>
    <property type="project" value="UniProtKB-KW"/>
</dbReference>
<dbReference type="GO" id="GO:0006397">
    <property type="term" value="P:mRNA processing"/>
    <property type="evidence" value="ECO:0007669"/>
    <property type="project" value="UniProtKB-UniRule"/>
</dbReference>
<dbReference type="GO" id="GO:0010468">
    <property type="term" value="P:regulation of gene expression"/>
    <property type="evidence" value="ECO:0007669"/>
    <property type="project" value="TreeGrafter"/>
</dbReference>
<dbReference type="GO" id="GO:0006364">
    <property type="term" value="P:rRNA processing"/>
    <property type="evidence" value="ECO:0007669"/>
    <property type="project" value="UniProtKB-UniRule"/>
</dbReference>
<dbReference type="GO" id="GO:0008033">
    <property type="term" value="P:tRNA processing"/>
    <property type="evidence" value="ECO:0007669"/>
    <property type="project" value="UniProtKB-KW"/>
</dbReference>
<dbReference type="CDD" id="cd10845">
    <property type="entry name" value="DSRM_RNAse_III_family"/>
    <property type="match status" value="1"/>
</dbReference>
<dbReference type="CDD" id="cd00593">
    <property type="entry name" value="RIBOc"/>
    <property type="match status" value="1"/>
</dbReference>
<dbReference type="FunFam" id="1.10.1520.10:FF:000001">
    <property type="entry name" value="Ribonuclease 3"/>
    <property type="match status" value="1"/>
</dbReference>
<dbReference type="Gene3D" id="3.30.160.20">
    <property type="match status" value="1"/>
</dbReference>
<dbReference type="Gene3D" id="1.10.1520.10">
    <property type="entry name" value="Ribonuclease III domain"/>
    <property type="match status" value="1"/>
</dbReference>
<dbReference type="HAMAP" id="MF_00104">
    <property type="entry name" value="RNase_III"/>
    <property type="match status" value="1"/>
</dbReference>
<dbReference type="InterPro" id="IPR014720">
    <property type="entry name" value="dsRBD_dom"/>
</dbReference>
<dbReference type="InterPro" id="IPR011907">
    <property type="entry name" value="RNase_III"/>
</dbReference>
<dbReference type="InterPro" id="IPR000999">
    <property type="entry name" value="RNase_III_dom"/>
</dbReference>
<dbReference type="InterPro" id="IPR036389">
    <property type="entry name" value="RNase_III_sf"/>
</dbReference>
<dbReference type="NCBIfam" id="TIGR02191">
    <property type="entry name" value="RNaseIII"/>
    <property type="match status" value="1"/>
</dbReference>
<dbReference type="PANTHER" id="PTHR11207:SF0">
    <property type="entry name" value="RIBONUCLEASE 3"/>
    <property type="match status" value="1"/>
</dbReference>
<dbReference type="PANTHER" id="PTHR11207">
    <property type="entry name" value="RIBONUCLEASE III"/>
    <property type="match status" value="1"/>
</dbReference>
<dbReference type="Pfam" id="PF00035">
    <property type="entry name" value="dsrm"/>
    <property type="match status" value="1"/>
</dbReference>
<dbReference type="Pfam" id="PF14622">
    <property type="entry name" value="Ribonucleas_3_3"/>
    <property type="match status" value="1"/>
</dbReference>
<dbReference type="SMART" id="SM00358">
    <property type="entry name" value="DSRM"/>
    <property type="match status" value="1"/>
</dbReference>
<dbReference type="SMART" id="SM00535">
    <property type="entry name" value="RIBOc"/>
    <property type="match status" value="1"/>
</dbReference>
<dbReference type="SUPFAM" id="SSF54768">
    <property type="entry name" value="dsRNA-binding domain-like"/>
    <property type="match status" value="1"/>
</dbReference>
<dbReference type="SUPFAM" id="SSF69065">
    <property type="entry name" value="RNase III domain-like"/>
    <property type="match status" value="1"/>
</dbReference>
<dbReference type="PROSITE" id="PS50137">
    <property type="entry name" value="DS_RBD"/>
    <property type="match status" value="1"/>
</dbReference>
<dbReference type="PROSITE" id="PS00517">
    <property type="entry name" value="RNASE_3_1"/>
    <property type="match status" value="1"/>
</dbReference>
<dbReference type="PROSITE" id="PS50142">
    <property type="entry name" value="RNASE_3_2"/>
    <property type="match status" value="1"/>
</dbReference>
<protein>
    <recommendedName>
        <fullName evidence="1">Ribonuclease 3</fullName>
        <ecNumber evidence="1">3.1.26.3</ecNumber>
    </recommendedName>
    <alternativeName>
        <fullName evidence="1">Ribonuclease III</fullName>
        <shortName evidence="1">RNase III</shortName>
    </alternativeName>
</protein>
<evidence type="ECO:0000255" key="1">
    <source>
        <dbReference type="HAMAP-Rule" id="MF_00104"/>
    </source>
</evidence>
<accession>Q0VP19</accession>
<comment type="function">
    <text evidence="1">Digests double-stranded RNA. Involved in the processing of primary rRNA transcript to yield the immediate precursors to the large and small rRNAs (23S and 16S). Processes some mRNAs, and tRNAs when they are encoded in the rRNA operon. Processes pre-crRNA and tracrRNA of type II CRISPR loci if present in the organism.</text>
</comment>
<comment type="catalytic activity">
    <reaction evidence="1">
        <text>Endonucleolytic cleavage to 5'-phosphomonoester.</text>
        <dbReference type="EC" id="3.1.26.3"/>
    </reaction>
</comment>
<comment type="cofactor">
    <cofactor evidence="1">
        <name>Mg(2+)</name>
        <dbReference type="ChEBI" id="CHEBI:18420"/>
    </cofactor>
</comment>
<comment type="subunit">
    <text evidence="1">Homodimer.</text>
</comment>
<comment type="subcellular location">
    <subcellularLocation>
        <location evidence="1">Cytoplasm</location>
    </subcellularLocation>
</comment>
<comment type="similarity">
    <text evidence="1">Belongs to the ribonuclease III family.</text>
</comment>
<keyword id="KW-0963">Cytoplasm</keyword>
<keyword id="KW-0255">Endonuclease</keyword>
<keyword id="KW-0378">Hydrolase</keyword>
<keyword id="KW-0460">Magnesium</keyword>
<keyword id="KW-0479">Metal-binding</keyword>
<keyword id="KW-0507">mRNA processing</keyword>
<keyword id="KW-0540">Nuclease</keyword>
<keyword id="KW-1185">Reference proteome</keyword>
<keyword id="KW-0694">RNA-binding</keyword>
<keyword id="KW-0698">rRNA processing</keyword>
<keyword id="KW-0699">rRNA-binding</keyword>
<keyword id="KW-0819">tRNA processing</keyword>
<gene>
    <name evidence="1" type="primary">rnc</name>
    <name type="ordered locus">ABO_1631</name>
</gene>
<name>RNC_ALCBS</name>
<reference key="1">
    <citation type="journal article" date="2006" name="Nat. Biotechnol.">
        <title>Genome sequence of the ubiquitous hydrocarbon-degrading marine bacterium Alcanivorax borkumensis.</title>
        <authorList>
            <person name="Schneiker S."/>
            <person name="Martins dos Santos V.A.P."/>
            <person name="Bartels D."/>
            <person name="Bekel T."/>
            <person name="Brecht M."/>
            <person name="Buhrmester J."/>
            <person name="Chernikova T.N."/>
            <person name="Denaro R."/>
            <person name="Ferrer M."/>
            <person name="Gertler C."/>
            <person name="Goesmann A."/>
            <person name="Golyshina O.V."/>
            <person name="Kaminski F."/>
            <person name="Khachane A.N."/>
            <person name="Lang S."/>
            <person name="Linke B."/>
            <person name="McHardy A.C."/>
            <person name="Meyer F."/>
            <person name="Nechitaylo T."/>
            <person name="Puehler A."/>
            <person name="Regenhardt D."/>
            <person name="Rupp O."/>
            <person name="Sabirova J.S."/>
            <person name="Selbitschka W."/>
            <person name="Yakimov M.M."/>
            <person name="Timmis K.N."/>
            <person name="Vorhoelter F.-J."/>
            <person name="Weidner S."/>
            <person name="Kaiser O."/>
            <person name="Golyshin P.N."/>
        </authorList>
    </citation>
    <scope>NUCLEOTIDE SEQUENCE [LARGE SCALE GENOMIC DNA]</scope>
    <source>
        <strain>ATCC 700651 / DSM 11573 / NCIMB 13689 / SK2</strain>
    </source>
</reference>